<sequence length="77" mass="8900">MESIFNNSFATLIAYIGIISTYLLVIPLLLFYWMNNRWNIMGKFERLGIYGLVFLFFPGLILFSPFLNLRLKGTGKG</sequence>
<name>NDHL_PROM0</name>
<reference key="1">
    <citation type="journal article" date="2007" name="PLoS Genet.">
        <title>Patterns and implications of gene gain and loss in the evolution of Prochlorococcus.</title>
        <authorList>
            <person name="Kettler G.C."/>
            <person name="Martiny A.C."/>
            <person name="Huang K."/>
            <person name="Zucker J."/>
            <person name="Coleman M.L."/>
            <person name="Rodrigue S."/>
            <person name="Chen F."/>
            <person name="Lapidus A."/>
            <person name="Ferriera S."/>
            <person name="Johnson J."/>
            <person name="Steglich C."/>
            <person name="Church G.M."/>
            <person name="Richardson P."/>
            <person name="Chisholm S.W."/>
        </authorList>
    </citation>
    <scope>NUCLEOTIDE SEQUENCE [LARGE SCALE GENOMIC DNA]</scope>
    <source>
        <strain>MIT 9301</strain>
    </source>
</reference>
<feature type="chain" id="PRO_0000353675" description="NAD(P)H-quinone oxidoreductase subunit L">
    <location>
        <begin position="1"/>
        <end position="77"/>
    </location>
</feature>
<feature type="transmembrane region" description="Helical" evidence="1">
    <location>
        <begin position="12"/>
        <end position="32"/>
    </location>
</feature>
<feature type="transmembrane region" description="Helical" evidence="1">
    <location>
        <begin position="47"/>
        <end position="67"/>
    </location>
</feature>
<accession>A3PBU4</accession>
<organism>
    <name type="scientific">Prochlorococcus marinus (strain MIT 9301)</name>
    <dbReference type="NCBI Taxonomy" id="167546"/>
    <lineage>
        <taxon>Bacteria</taxon>
        <taxon>Bacillati</taxon>
        <taxon>Cyanobacteriota</taxon>
        <taxon>Cyanophyceae</taxon>
        <taxon>Synechococcales</taxon>
        <taxon>Prochlorococcaceae</taxon>
        <taxon>Prochlorococcus</taxon>
    </lineage>
</organism>
<comment type="function">
    <text evidence="1">NDH-1 shuttles electrons from an unknown electron donor, via FMN and iron-sulfur (Fe-S) centers, to quinones in the respiratory and/or the photosynthetic chain. The immediate electron acceptor for the enzyme in this species is believed to be plastoquinone. Couples the redox reaction to proton translocation, and thus conserves the redox energy in a proton gradient. Cyanobacterial NDH-1 also plays a role in inorganic carbon-concentration.</text>
</comment>
<comment type="catalytic activity">
    <reaction evidence="1">
        <text>a plastoquinone + NADH + (n+1) H(+)(in) = a plastoquinol + NAD(+) + n H(+)(out)</text>
        <dbReference type="Rhea" id="RHEA:42608"/>
        <dbReference type="Rhea" id="RHEA-COMP:9561"/>
        <dbReference type="Rhea" id="RHEA-COMP:9562"/>
        <dbReference type="ChEBI" id="CHEBI:15378"/>
        <dbReference type="ChEBI" id="CHEBI:17757"/>
        <dbReference type="ChEBI" id="CHEBI:57540"/>
        <dbReference type="ChEBI" id="CHEBI:57945"/>
        <dbReference type="ChEBI" id="CHEBI:62192"/>
    </reaction>
</comment>
<comment type="catalytic activity">
    <reaction evidence="1">
        <text>a plastoquinone + NADPH + (n+1) H(+)(in) = a plastoquinol + NADP(+) + n H(+)(out)</text>
        <dbReference type="Rhea" id="RHEA:42612"/>
        <dbReference type="Rhea" id="RHEA-COMP:9561"/>
        <dbReference type="Rhea" id="RHEA-COMP:9562"/>
        <dbReference type="ChEBI" id="CHEBI:15378"/>
        <dbReference type="ChEBI" id="CHEBI:17757"/>
        <dbReference type="ChEBI" id="CHEBI:57783"/>
        <dbReference type="ChEBI" id="CHEBI:58349"/>
        <dbReference type="ChEBI" id="CHEBI:62192"/>
    </reaction>
</comment>
<comment type="subunit">
    <text evidence="1">NDH-1 can be composed of about 15 different subunits; different subcomplexes with different compositions have been identified which probably have different functions.</text>
</comment>
<comment type="subcellular location">
    <subcellularLocation>
        <location evidence="1">Cellular thylakoid membrane</location>
        <topology evidence="1">Multi-pass membrane protein</topology>
    </subcellularLocation>
</comment>
<comment type="similarity">
    <text evidence="1">Belongs to the complex I NdhL subunit family.</text>
</comment>
<proteinExistence type="inferred from homology"/>
<protein>
    <recommendedName>
        <fullName evidence="1">NAD(P)H-quinone oxidoreductase subunit L</fullName>
        <ecNumber evidence="1">7.1.1.-</ecNumber>
    </recommendedName>
    <alternativeName>
        <fullName evidence="1">NAD(P)H dehydrogenase I subunit L</fullName>
    </alternativeName>
    <alternativeName>
        <fullName>NDH-1 subunit L</fullName>
    </alternativeName>
    <alternativeName>
        <fullName>NDH-L</fullName>
    </alternativeName>
</protein>
<dbReference type="EC" id="7.1.1.-" evidence="1"/>
<dbReference type="EMBL" id="CP000576">
    <property type="protein sequence ID" value="ABO17219.1"/>
    <property type="molecule type" value="Genomic_DNA"/>
</dbReference>
<dbReference type="RefSeq" id="WP_011862586.1">
    <property type="nucleotide sequence ID" value="NC_009091.1"/>
</dbReference>
<dbReference type="SMR" id="A3PBU4"/>
<dbReference type="STRING" id="167546.P9301_05961"/>
<dbReference type="KEGG" id="pmg:P9301_05961"/>
<dbReference type="eggNOG" id="ENOG5030RAT">
    <property type="taxonomic scope" value="Bacteria"/>
</dbReference>
<dbReference type="HOGENOM" id="CLU_171077_1_0_3"/>
<dbReference type="OrthoDB" id="517549at2"/>
<dbReference type="Proteomes" id="UP000001430">
    <property type="component" value="Chromosome"/>
</dbReference>
<dbReference type="GO" id="GO:0031676">
    <property type="term" value="C:plasma membrane-derived thylakoid membrane"/>
    <property type="evidence" value="ECO:0007669"/>
    <property type="project" value="UniProtKB-SubCell"/>
</dbReference>
<dbReference type="GO" id="GO:0016655">
    <property type="term" value="F:oxidoreductase activity, acting on NAD(P)H, quinone or similar compound as acceptor"/>
    <property type="evidence" value="ECO:0007669"/>
    <property type="project" value="UniProtKB-UniRule"/>
</dbReference>
<dbReference type="GO" id="GO:0048038">
    <property type="term" value="F:quinone binding"/>
    <property type="evidence" value="ECO:0007669"/>
    <property type="project" value="UniProtKB-KW"/>
</dbReference>
<dbReference type="HAMAP" id="MF_01355">
    <property type="entry name" value="NDH1_NDH1L"/>
    <property type="match status" value="1"/>
</dbReference>
<dbReference type="InterPro" id="IPR019654">
    <property type="entry name" value="NADH-quinone_OxRdatse_su_L"/>
</dbReference>
<dbReference type="Pfam" id="PF10716">
    <property type="entry name" value="NdhL"/>
    <property type="match status" value="1"/>
</dbReference>
<keyword id="KW-0472">Membrane</keyword>
<keyword id="KW-0520">NAD</keyword>
<keyword id="KW-0521">NADP</keyword>
<keyword id="KW-0618">Plastoquinone</keyword>
<keyword id="KW-0874">Quinone</keyword>
<keyword id="KW-1185">Reference proteome</keyword>
<keyword id="KW-0793">Thylakoid</keyword>
<keyword id="KW-1278">Translocase</keyword>
<keyword id="KW-0812">Transmembrane</keyword>
<keyword id="KW-1133">Transmembrane helix</keyword>
<keyword id="KW-0813">Transport</keyword>
<evidence type="ECO:0000255" key="1">
    <source>
        <dbReference type="HAMAP-Rule" id="MF_01355"/>
    </source>
</evidence>
<gene>
    <name evidence="1" type="primary">ndhL</name>
    <name type="ordered locus">P9301_05961</name>
</gene>